<sequence length="448" mass="51045">MSRKLITINQVKDYVGQEVTIGAWVANKSGKGKLAFLQLRDGTAFFQAVAFKPNFIEKFGEEAGTEKFDVAKRLSQETSVYVTGIVKEDERSKFGYELDVTDLEVIGESQDYPITPKEHGTDFLMDNRHLWLRSRKQVAIQQIRNAIIYATYEFFEKNGFIKFDSPILSGNAAEDSTELFETDYFGQLAYLSQSGQLYLEAGAMALGRVFDFGPVFRAEKSKTRRHLTEFWMMDAEYSFLSHEESLDLQEAYVKALIQGVIDRAPQALETLERDVDALKRYIAEPFKRVAYDDAITLLQEHEADKDTDYEHIEHGDDFGSPHETWISNYFGVPTFVVNYPASFKAFYMKPVPGNPERVLCADLLAPEGYGEIIGGSMREDNYDALVAKMDELGMDKSEYEFYLDLRKYGSVPHGGFGIGIERMVTFVAGTKHIREAIPFPRMLHRLHP</sequence>
<comment type="catalytic activity">
    <reaction evidence="1">
        <text>tRNA(Asn) + L-asparagine + ATP = L-asparaginyl-tRNA(Asn) + AMP + diphosphate + H(+)</text>
        <dbReference type="Rhea" id="RHEA:11180"/>
        <dbReference type="Rhea" id="RHEA-COMP:9659"/>
        <dbReference type="Rhea" id="RHEA-COMP:9674"/>
        <dbReference type="ChEBI" id="CHEBI:15378"/>
        <dbReference type="ChEBI" id="CHEBI:30616"/>
        <dbReference type="ChEBI" id="CHEBI:33019"/>
        <dbReference type="ChEBI" id="CHEBI:58048"/>
        <dbReference type="ChEBI" id="CHEBI:78442"/>
        <dbReference type="ChEBI" id="CHEBI:78515"/>
        <dbReference type="ChEBI" id="CHEBI:456215"/>
        <dbReference type="EC" id="6.1.1.22"/>
    </reaction>
</comment>
<comment type="subunit">
    <text evidence="1">Homodimer.</text>
</comment>
<comment type="subcellular location">
    <subcellularLocation>
        <location evidence="1">Cytoplasm</location>
    </subcellularLocation>
</comment>
<comment type="similarity">
    <text evidence="1">Belongs to the class-II aminoacyl-tRNA synthetase family.</text>
</comment>
<feature type="chain" id="PRO_1000051448" description="Asparagine--tRNA ligase">
    <location>
        <begin position="1"/>
        <end position="448"/>
    </location>
</feature>
<reference key="1">
    <citation type="journal article" date="2007" name="PLoS ONE">
        <title>A glimpse of streptococcal toxic shock syndrome from comparative genomics of S. suis 2 Chinese isolates.</title>
        <authorList>
            <person name="Chen C."/>
            <person name="Tang J."/>
            <person name="Dong W."/>
            <person name="Wang C."/>
            <person name="Feng Y."/>
            <person name="Wang J."/>
            <person name="Zheng F."/>
            <person name="Pan X."/>
            <person name="Liu D."/>
            <person name="Li M."/>
            <person name="Song Y."/>
            <person name="Zhu X."/>
            <person name="Sun H."/>
            <person name="Feng T."/>
            <person name="Guo Z."/>
            <person name="Ju A."/>
            <person name="Ge J."/>
            <person name="Dong Y."/>
            <person name="Sun W."/>
            <person name="Jiang Y."/>
            <person name="Wang J."/>
            <person name="Yan J."/>
            <person name="Yang H."/>
            <person name="Wang X."/>
            <person name="Gao G.F."/>
            <person name="Yang R."/>
            <person name="Wang J."/>
            <person name="Yu J."/>
        </authorList>
    </citation>
    <scope>NUCLEOTIDE SEQUENCE [LARGE SCALE GENOMIC DNA]</scope>
    <source>
        <strain>98HAH33</strain>
    </source>
</reference>
<organism>
    <name type="scientific">Streptococcus suis (strain 98HAH33)</name>
    <dbReference type="NCBI Taxonomy" id="391296"/>
    <lineage>
        <taxon>Bacteria</taxon>
        <taxon>Bacillati</taxon>
        <taxon>Bacillota</taxon>
        <taxon>Bacilli</taxon>
        <taxon>Lactobacillales</taxon>
        <taxon>Streptococcaceae</taxon>
        <taxon>Streptococcus</taxon>
    </lineage>
</organism>
<evidence type="ECO:0000255" key="1">
    <source>
        <dbReference type="HAMAP-Rule" id="MF_00534"/>
    </source>
</evidence>
<dbReference type="EC" id="6.1.1.22" evidence="1"/>
<dbReference type="EMBL" id="CP000408">
    <property type="protein sequence ID" value="ABP91772.1"/>
    <property type="molecule type" value="Genomic_DNA"/>
</dbReference>
<dbReference type="SMR" id="A4W083"/>
<dbReference type="KEGG" id="ssv:SSU98_0614"/>
<dbReference type="HOGENOM" id="CLU_004553_2_0_9"/>
<dbReference type="GO" id="GO:0005737">
    <property type="term" value="C:cytoplasm"/>
    <property type="evidence" value="ECO:0007669"/>
    <property type="project" value="UniProtKB-SubCell"/>
</dbReference>
<dbReference type="GO" id="GO:0004816">
    <property type="term" value="F:asparagine-tRNA ligase activity"/>
    <property type="evidence" value="ECO:0007669"/>
    <property type="project" value="UniProtKB-UniRule"/>
</dbReference>
<dbReference type="GO" id="GO:0005524">
    <property type="term" value="F:ATP binding"/>
    <property type="evidence" value="ECO:0007669"/>
    <property type="project" value="UniProtKB-UniRule"/>
</dbReference>
<dbReference type="GO" id="GO:0140096">
    <property type="term" value="F:catalytic activity, acting on a protein"/>
    <property type="evidence" value="ECO:0007669"/>
    <property type="project" value="UniProtKB-ARBA"/>
</dbReference>
<dbReference type="GO" id="GO:0003676">
    <property type="term" value="F:nucleic acid binding"/>
    <property type="evidence" value="ECO:0007669"/>
    <property type="project" value="InterPro"/>
</dbReference>
<dbReference type="GO" id="GO:0016740">
    <property type="term" value="F:transferase activity"/>
    <property type="evidence" value="ECO:0007669"/>
    <property type="project" value="UniProtKB-ARBA"/>
</dbReference>
<dbReference type="GO" id="GO:0006421">
    <property type="term" value="P:asparaginyl-tRNA aminoacylation"/>
    <property type="evidence" value="ECO:0007669"/>
    <property type="project" value="UniProtKB-UniRule"/>
</dbReference>
<dbReference type="CDD" id="cd04323">
    <property type="entry name" value="AsnRS_cyto_like_N"/>
    <property type="match status" value="1"/>
</dbReference>
<dbReference type="CDD" id="cd00776">
    <property type="entry name" value="AsxRS_core"/>
    <property type="match status" value="1"/>
</dbReference>
<dbReference type="Gene3D" id="3.30.930.10">
    <property type="entry name" value="Bira Bifunctional Protein, Domain 2"/>
    <property type="match status" value="1"/>
</dbReference>
<dbReference type="Gene3D" id="2.40.50.140">
    <property type="entry name" value="Nucleic acid-binding proteins"/>
    <property type="match status" value="1"/>
</dbReference>
<dbReference type="HAMAP" id="MF_00534">
    <property type="entry name" value="Asn_tRNA_synth"/>
    <property type="match status" value="1"/>
</dbReference>
<dbReference type="InterPro" id="IPR004364">
    <property type="entry name" value="Aa-tRNA-synt_II"/>
</dbReference>
<dbReference type="InterPro" id="IPR006195">
    <property type="entry name" value="aa-tRNA-synth_II"/>
</dbReference>
<dbReference type="InterPro" id="IPR045864">
    <property type="entry name" value="aa-tRNA-synth_II/BPL/LPL"/>
</dbReference>
<dbReference type="InterPro" id="IPR004522">
    <property type="entry name" value="Asn-tRNA-ligase"/>
</dbReference>
<dbReference type="InterPro" id="IPR002312">
    <property type="entry name" value="Asp/Asn-tRNA-synth_IIb"/>
</dbReference>
<dbReference type="InterPro" id="IPR012340">
    <property type="entry name" value="NA-bd_OB-fold"/>
</dbReference>
<dbReference type="InterPro" id="IPR004365">
    <property type="entry name" value="NA-bd_OB_tRNA"/>
</dbReference>
<dbReference type="NCBIfam" id="TIGR00457">
    <property type="entry name" value="asnS"/>
    <property type="match status" value="1"/>
</dbReference>
<dbReference type="NCBIfam" id="NF003037">
    <property type="entry name" value="PRK03932.1"/>
    <property type="match status" value="1"/>
</dbReference>
<dbReference type="PANTHER" id="PTHR22594:SF34">
    <property type="entry name" value="ASPARAGINE--TRNA LIGASE, MITOCHONDRIAL-RELATED"/>
    <property type="match status" value="1"/>
</dbReference>
<dbReference type="PANTHER" id="PTHR22594">
    <property type="entry name" value="ASPARTYL/LYSYL-TRNA SYNTHETASE"/>
    <property type="match status" value="1"/>
</dbReference>
<dbReference type="Pfam" id="PF00152">
    <property type="entry name" value="tRNA-synt_2"/>
    <property type="match status" value="1"/>
</dbReference>
<dbReference type="Pfam" id="PF01336">
    <property type="entry name" value="tRNA_anti-codon"/>
    <property type="match status" value="1"/>
</dbReference>
<dbReference type="PRINTS" id="PR01042">
    <property type="entry name" value="TRNASYNTHASP"/>
</dbReference>
<dbReference type="SUPFAM" id="SSF55681">
    <property type="entry name" value="Class II aaRS and biotin synthetases"/>
    <property type="match status" value="1"/>
</dbReference>
<dbReference type="SUPFAM" id="SSF50249">
    <property type="entry name" value="Nucleic acid-binding proteins"/>
    <property type="match status" value="1"/>
</dbReference>
<dbReference type="PROSITE" id="PS50862">
    <property type="entry name" value="AA_TRNA_LIGASE_II"/>
    <property type="match status" value="1"/>
</dbReference>
<protein>
    <recommendedName>
        <fullName evidence="1">Asparagine--tRNA ligase</fullName>
        <ecNumber evidence="1">6.1.1.22</ecNumber>
    </recommendedName>
    <alternativeName>
        <fullName evidence="1">Asparaginyl-tRNA synthetase</fullName>
        <shortName evidence="1">AsnRS</shortName>
    </alternativeName>
</protein>
<proteinExistence type="inferred from homology"/>
<gene>
    <name evidence="1" type="primary">asnS</name>
    <name type="ordered locus">SSU98_0614</name>
</gene>
<name>SYN_STRS2</name>
<accession>A4W083</accession>
<keyword id="KW-0030">Aminoacyl-tRNA synthetase</keyword>
<keyword id="KW-0067">ATP-binding</keyword>
<keyword id="KW-0963">Cytoplasm</keyword>
<keyword id="KW-0436">Ligase</keyword>
<keyword id="KW-0547">Nucleotide-binding</keyword>
<keyword id="KW-0648">Protein biosynthesis</keyword>